<dbReference type="EMBL" id="AJ292768">
    <property type="protein sequence ID" value="CAC01238.1"/>
    <property type="molecule type" value="mRNA"/>
</dbReference>
<dbReference type="SMR" id="Q9LEB3"/>
<dbReference type="GO" id="GO:0010494">
    <property type="term" value="C:cytoplasmic stress granule"/>
    <property type="evidence" value="ECO:0000314"/>
    <property type="project" value="UniProtKB"/>
</dbReference>
<dbReference type="GO" id="GO:0005829">
    <property type="term" value="C:cytosol"/>
    <property type="evidence" value="ECO:0007669"/>
    <property type="project" value="TreeGrafter"/>
</dbReference>
<dbReference type="GO" id="GO:0005634">
    <property type="term" value="C:nucleus"/>
    <property type="evidence" value="ECO:0000314"/>
    <property type="project" value="UniProtKB"/>
</dbReference>
<dbReference type="GO" id="GO:0003729">
    <property type="term" value="F:mRNA binding"/>
    <property type="evidence" value="ECO:0007669"/>
    <property type="project" value="InterPro"/>
</dbReference>
<dbReference type="GO" id="GO:0008143">
    <property type="term" value="F:poly(A) binding"/>
    <property type="evidence" value="ECO:0000314"/>
    <property type="project" value="UniProtKB"/>
</dbReference>
<dbReference type="GO" id="GO:0034605">
    <property type="term" value="P:cellular response to heat"/>
    <property type="evidence" value="ECO:0000314"/>
    <property type="project" value="UniProtKB"/>
</dbReference>
<dbReference type="GO" id="GO:0006397">
    <property type="term" value="P:mRNA processing"/>
    <property type="evidence" value="ECO:0007669"/>
    <property type="project" value="UniProtKB-KW"/>
</dbReference>
<dbReference type="CDD" id="cd12344">
    <property type="entry name" value="RRM1_SECp43_like"/>
    <property type="match status" value="1"/>
</dbReference>
<dbReference type="CDD" id="cd12345">
    <property type="entry name" value="RRM2_SECp43_like"/>
    <property type="match status" value="1"/>
</dbReference>
<dbReference type="FunFam" id="3.30.70.330:FF:000395">
    <property type="entry name" value="Polyadenylate-binding protein RBP47"/>
    <property type="match status" value="1"/>
</dbReference>
<dbReference type="FunFam" id="3.30.70.330:FF:000737">
    <property type="entry name" value="polyadenylate-binding protein RBP47 isoform X2"/>
    <property type="match status" value="1"/>
</dbReference>
<dbReference type="FunFam" id="3.30.70.330:FF:000144">
    <property type="entry name" value="Polyadenylate-binding protein RBP47B"/>
    <property type="match status" value="1"/>
</dbReference>
<dbReference type="Gene3D" id="3.30.70.330">
    <property type="match status" value="3"/>
</dbReference>
<dbReference type="InterPro" id="IPR012677">
    <property type="entry name" value="Nucleotide-bd_a/b_plait_sf"/>
</dbReference>
<dbReference type="InterPro" id="IPR035979">
    <property type="entry name" value="RBD_domain_sf"/>
</dbReference>
<dbReference type="InterPro" id="IPR050825">
    <property type="entry name" value="RBM42_RBP45_47-like"/>
</dbReference>
<dbReference type="InterPro" id="IPR000504">
    <property type="entry name" value="RRM_dom"/>
</dbReference>
<dbReference type="PANTHER" id="PTHR47640:SF66">
    <property type="entry name" value="POLYADENYLATE-BINDING PROTEIN RBP47"/>
    <property type="match status" value="1"/>
</dbReference>
<dbReference type="PANTHER" id="PTHR47640">
    <property type="entry name" value="TRNA SELENOCYSTEINE 1-ASSOCIATED PROTEIN 1-RELATED-RELATED"/>
    <property type="match status" value="1"/>
</dbReference>
<dbReference type="Pfam" id="PF00076">
    <property type="entry name" value="RRM_1"/>
    <property type="match status" value="3"/>
</dbReference>
<dbReference type="SMART" id="SM00360">
    <property type="entry name" value="RRM"/>
    <property type="match status" value="3"/>
</dbReference>
<dbReference type="SUPFAM" id="SSF54928">
    <property type="entry name" value="RNA-binding domain, RBD"/>
    <property type="match status" value="3"/>
</dbReference>
<dbReference type="PROSITE" id="PS50102">
    <property type="entry name" value="RRM"/>
    <property type="match status" value="3"/>
</dbReference>
<reference key="1">
    <citation type="journal article" date="2000" name="RNA">
        <title>RBP45 and RBP47, two oligouridylate-specific hnRNP-like proteins interacting with poly(A)+ RNA in nuclei of plant cells.</title>
        <authorList>
            <person name="Lorkovic Z.J."/>
            <person name="Wieczorek Kirk D.A."/>
            <person name="Klahre U."/>
            <person name="Hemmings-Mieszczak M."/>
            <person name="Filipowicz W."/>
        </authorList>
    </citation>
    <scope>NUCLEOTIDE SEQUENCE [MRNA]</scope>
    <scope>FUNCTION</scope>
    <scope>TISSUE SPECIFICITY</scope>
    <scope>SUBUNIT</scope>
    <scope>SUBCELLULAR LOCATION</scope>
    <scope>GENE FAMILY</scope>
    <scope>NOMENCLATURE</scope>
</reference>
<reference key="2">
    <citation type="journal article" date="2008" name="Plant J.">
        <title>Plant stress granules and mRNA processing bodies are distinct from heat stress granules.</title>
        <authorList>
            <person name="Weber C."/>
            <person name="Nover L."/>
            <person name="Fauth M."/>
        </authorList>
    </citation>
    <scope>FUNCTION</scope>
    <scope>SUBCELLULAR LOCATION</scope>
</reference>
<evidence type="ECO:0000255" key="1">
    <source>
        <dbReference type="PROSITE-ProRule" id="PRU00176"/>
    </source>
</evidence>
<evidence type="ECO:0000269" key="2">
    <source>
    </source>
</evidence>
<evidence type="ECO:0000269" key="3">
    <source>
    </source>
</evidence>
<evidence type="ECO:0000305" key="4"/>
<comment type="function">
    <text evidence="2 3">Heterogeneous nuclear ribonucleoprotein (hnRNP)-protein binding the poly(A) tail of mRNA and probably involved in some steps of pre-mRNA maturation.</text>
</comment>
<comment type="subunit">
    <text evidence="2">Interacts with the poly(A) tail of mRNA in nucleus.</text>
</comment>
<comment type="subcellular location">
    <subcellularLocation>
        <location>Nucleus</location>
    </subcellularLocation>
    <subcellularLocation>
        <location>Cytoplasmic granule</location>
    </subcellularLocation>
    <text>Relocalizes from nucleus to cytoplasmic stress granules (SGs) under heat stress.</text>
</comment>
<comment type="tissue specificity">
    <text evidence="2">Constitutively expressed in leaves, roots, and stems.</text>
</comment>
<comment type="similarity">
    <text evidence="4">Belongs to the polyadenylate-binding RBP47 family.</text>
</comment>
<keyword id="KW-0507">mRNA processing</keyword>
<keyword id="KW-0539">Nucleus</keyword>
<keyword id="KW-0677">Repeat</keyword>
<keyword id="KW-0694">RNA-binding</keyword>
<keyword id="KW-0346">Stress response</keyword>
<sequence length="428" mass="47374">MNGGDMNQQQQQQQQQHQQQQQQWLAMQQYQQQWMAMQYPAAAMAMQQQMMYGQQYMPYYQQHQQQQKMQQSPTQIQSSSEDNKTIWIGDLQQWMDESYLHSCFSQAGEVISVKIIRNKQTGQSERYGFVEFNTHAAAEKVLQSYNGTMMPNTEQPFRLNWAGFSTGEKRAETGSDFSIFVGDLASDVTDTMLRDTFASRYPSLKGAKVVVDANTGHSKGYGFVRFGDESERSRAMTEMNGVYCSSRAMRIGVATPKKPSAHEQYSSQAVILSGGYASNGAATHGSQSDGDSSNTTIFVGGLDSEVTDEELRQSFNQFGEVVSVKIPAGKGCGFVQFSDRSSAQEAIQKLSGAIIGKQAVRLSWGRSPANKQMRTDSGSQWNGGYNGRQNYGGYGYGASQNQDSGMYATGAAYGASSNRYGNHQQPVS</sequence>
<name>RBP47_NICPL</name>
<protein>
    <recommendedName>
        <fullName>Polyadenylate-binding protein RBP47</fullName>
        <shortName>Poly(A)-binding protein RBP47</shortName>
    </recommendedName>
    <alternativeName>
        <fullName>RNA-binding protein 47</fullName>
        <shortName>NplRBP47</shortName>
    </alternativeName>
</protein>
<gene>
    <name type="primary">RBP47</name>
</gene>
<organism>
    <name type="scientific">Nicotiana plumbaginifolia</name>
    <name type="common">Leadwort-leaved tobacco</name>
    <name type="synonym">Tex-Mex tobacco</name>
    <dbReference type="NCBI Taxonomy" id="4092"/>
    <lineage>
        <taxon>Eukaryota</taxon>
        <taxon>Viridiplantae</taxon>
        <taxon>Streptophyta</taxon>
        <taxon>Embryophyta</taxon>
        <taxon>Tracheophyta</taxon>
        <taxon>Spermatophyta</taxon>
        <taxon>Magnoliopsida</taxon>
        <taxon>eudicotyledons</taxon>
        <taxon>Gunneridae</taxon>
        <taxon>Pentapetalae</taxon>
        <taxon>asterids</taxon>
        <taxon>lamiids</taxon>
        <taxon>Solanales</taxon>
        <taxon>Solanaceae</taxon>
        <taxon>Nicotianoideae</taxon>
        <taxon>Nicotianeae</taxon>
        <taxon>Nicotiana</taxon>
    </lineage>
</organism>
<feature type="chain" id="PRO_0000415765" description="Polyadenylate-binding protein RBP47">
    <location>
        <begin position="1"/>
        <end position="428"/>
    </location>
</feature>
<feature type="domain" description="RRM 1" evidence="1">
    <location>
        <begin position="84"/>
        <end position="164"/>
    </location>
</feature>
<feature type="domain" description="RRM 2" evidence="1">
    <location>
        <begin position="177"/>
        <end position="256"/>
    </location>
</feature>
<feature type="domain" description="RRM 3" evidence="1">
    <location>
        <begin position="295"/>
        <end position="367"/>
    </location>
</feature>
<proteinExistence type="evidence at protein level"/>
<accession>Q9LEB3</accession>